<proteinExistence type="inferred from homology"/>
<protein>
    <recommendedName>
        <fullName evidence="1">Isoleucine--tRNA ligase</fullName>
        <ecNumber evidence="1">6.1.1.5</ecNumber>
    </recommendedName>
    <alternativeName>
        <fullName evidence="1">Isoleucyl-tRNA synthetase</fullName>
        <shortName evidence="1">IleRS</shortName>
    </alternativeName>
</protein>
<organism>
    <name type="scientific">Wolbachia pipientis wMel</name>
    <dbReference type="NCBI Taxonomy" id="163164"/>
    <lineage>
        <taxon>Bacteria</taxon>
        <taxon>Pseudomonadati</taxon>
        <taxon>Pseudomonadota</taxon>
        <taxon>Alphaproteobacteria</taxon>
        <taxon>Rickettsiales</taxon>
        <taxon>Anaplasmataceae</taxon>
        <taxon>Wolbachieae</taxon>
        <taxon>Wolbachia</taxon>
    </lineage>
</organism>
<feature type="chain" id="PRO_0000098572" description="Isoleucine--tRNA ligase">
    <location>
        <begin position="1"/>
        <end position="1111"/>
    </location>
</feature>
<feature type="short sequence motif" description="'HIGH' region">
    <location>
        <begin position="52"/>
        <end position="62"/>
    </location>
</feature>
<feature type="short sequence motif" description="'KMSKS' region">
    <location>
        <begin position="645"/>
        <end position="649"/>
    </location>
</feature>
<feature type="binding site" evidence="1">
    <location>
        <position position="648"/>
    </location>
    <ligand>
        <name>ATP</name>
        <dbReference type="ChEBI" id="CHEBI:30616"/>
    </ligand>
</feature>
<sequence>MKSKHYPDTVSSPDFLSLEKEIIKFWQENKVFERSVEERSKDNCFVFYDGPPFANGLPHYGHLLTGFIKDAFARYQTMLQKRVERRFGWDCHGLPAEMGAEKELGISGRTEIEKFGIDKFNDHCRTSVMKFSSEWEKYVNRQARWVDFHNDYKTMDKSFMESVMWAFKQLYDKGLVYESVRVVPYSWACETPLSNFETRLDNAYREKVSKAVTVAFELLENPQQFKSVKRKCKLLAWTTTPWTLPSNLALAIGKDIKYCAVSVHPLMSFQRVTLESISGSQCLGTGMTGSSEGSSMNGEIYIFAESYLEKFISHSEQNNIPYENCNIKLKANDLAGLSYKPLFDYFKDTKNAFRVFIADYVTEEDGTGVVHTAPGFGEEDFYLCQSHDIPVICPIDNSGKFTAEVSDLAGVHVFDANDTVIKKLKGQGSWFKTEQYIHNYPHCWRTDTPLIYRTMPSWYVAVTKFKSRMVELNKRVNWIPNHIRDGQFGKWLEGAHDWSISRNRFWGTPIPVWKSDDARYPRVDVYGSIEELERDFNVKIDDLHRPFIDTLTRLNPDDPTGKSVMRRVPDVFDCWFESGSMPFAQIHYPFENKEWFESADFITEYIAQTRGWFYTLFVLSTALFNREPFKNCICHGVVLDVKGQKLSKRLNNYADPMEVFDRYGSDALRFLMLSGSIICGGNLLLDKEGNSIRDVLKNVIKPIWNSYHFFTMYANADGIKAEVCKDYQSTIDRYMISKCFEAVESIQASMNSYSSQEACKILIDFFEVLNNWYIRRSRERFWKSDLDQDKTDAYNVLYTVFYYILRAAAPLLPLITENIWQGLKYEETSVHLANFPQLEKFDSQLIAKMDLVREVCNSALSIRNTFNIRIRQPLGSMIIYHQSSCSFLEGEPLSVIPEFFPVIQVADTGIQCAADSNEYQEMIKDEVNVKSLELVNRLEGIASLELKLNFPLLGKRIPDKIKKLVQYVKEGKWKQVENEQIFLGDESENYIIEKGEYELLLKANSEYSSVFDNNKGIVILNTELNDELILEGLARDVVRLIQETRKQADFHISDRIRVIIKTEEEKIKEAINTWFEYIKEQTLALSLDINTEIGTNFYSKEYQDLSVSIER</sequence>
<comment type="function">
    <text evidence="1">Catalyzes the attachment of isoleucine to tRNA(Ile). As IleRS can inadvertently accommodate and process structurally similar amino acids such as valine, to avoid such errors it has two additional distinct tRNA(Ile)-dependent editing activities. One activity is designated as 'pretransfer' editing and involves the hydrolysis of activated Val-AMP. The other activity is designated 'posttransfer' editing and involves deacylation of mischarged Val-tRNA(Ile).</text>
</comment>
<comment type="catalytic activity">
    <reaction evidence="1">
        <text>tRNA(Ile) + L-isoleucine + ATP = L-isoleucyl-tRNA(Ile) + AMP + diphosphate</text>
        <dbReference type="Rhea" id="RHEA:11060"/>
        <dbReference type="Rhea" id="RHEA-COMP:9666"/>
        <dbReference type="Rhea" id="RHEA-COMP:9695"/>
        <dbReference type="ChEBI" id="CHEBI:30616"/>
        <dbReference type="ChEBI" id="CHEBI:33019"/>
        <dbReference type="ChEBI" id="CHEBI:58045"/>
        <dbReference type="ChEBI" id="CHEBI:78442"/>
        <dbReference type="ChEBI" id="CHEBI:78528"/>
        <dbReference type="ChEBI" id="CHEBI:456215"/>
        <dbReference type="EC" id="6.1.1.5"/>
    </reaction>
</comment>
<comment type="cofactor">
    <cofactor evidence="1">
        <name>Zn(2+)</name>
        <dbReference type="ChEBI" id="CHEBI:29105"/>
    </cofactor>
</comment>
<comment type="subunit">
    <text evidence="1">Monomer.</text>
</comment>
<comment type="subcellular location">
    <subcellularLocation>
        <location evidence="1">Cytoplasm</location>
    </subcellularLocation>
</comment>
<comment type="domain">
    <text evidence="1">IleRS has two distinct active sites: one for aminoacylation and one for editing. The misactivated valine is translocated from the active site to the editing site, which sterically excludes the correctly activated isoleucine. The single editing site contains two valyl binding pockets, one specific for each substrate (Val-AMP or Val-tRNA(Ile)).</text>
</comment>
<comment type="similarity">
    <text evidence="1">Belongs to the class-I aminoacyl-tRNA synthetase family. IleS type 2 subfamily.</text>
</comment>
<reference key="1">
    <citation type="journal article" date="2004" name="PLoS Biol.">
        <title>Phylogenomics of the reproductive parasite Wolbachia pipientis wMel: a streamlined genome overrun by mobile genetic elements.</title>
        <authorList>
            <person name="Wu M."/>
            <person name="Sun L.V."/>
            <person name="Vamathevan J.J."/>
            <person name="Riegler M."/>
            <person name="DeBoy R.T."/>
            <person name="Brownlie J.C."/>
            <person name="McGraw E.A."/>
            <person name="Martin W."/>
            <person name="Esser C."/>
            <person name="Ahmadinejad N."/>
            <person name="Wiegand C."/>
            <person name="Madupu R."/>
            <person name="Beanan M.J."/>
            <person name="Brinkac L.M."/>
            <person name="Daugherty S.C."/>
            <person name="Durkin A.S."/>
            <person name="Kolonay J.F."/>
            <person name="Nelson W.C."/>
            <person name="Mohamoud Y."/>
            <person name="Lee P."/>
            <person name="Berry K.J."/>
            <person name="Young M.B."/>
            <person name="Utterback T.R."/>
            <person name="Weidman J.F."/>
            <person name="Nierman W.C."/>
            <person name="Paulsen I.T."/>
            <person name="Nelson K.E."/>
            <person name="Tettelin H."/>
            <person name="O'Neill S.L."/>
            <person name="Eisen J.A."/>
        </authorList>
    </citation>
    <scope>NUCLEOTIDE SEQUENCE [LARGE SCALE GENOMIC DNA]</scope>
</reference>
<keyword id="KW-0030">Aminoacyl-tRNA synthetase</keyword>
<keyword id="KW-0067">ATP-binding</keyword>
<keyword id="KW-0963">Cytoplasm</keyword>
<keyword id="KW-0436">Ligase</keyword>
<keyword id="KW-0479">Metal-binding</keyword>
<keyword id="KW-0547">Nucleotide-binding</keyword>
<keyword id="KW-0648">Protein biosynthesis</keyword>
<keyword id="KW-0862">Zinc</keyword>
<accession>Q73HW7</accession>
<name>SYI_WOLPM</name>
<dbReference type="EC" id="6.1.1.5" evidence="1"/>
<dbReference type="EMBL" id="AE017196">
    <property type="protein sequence ID" value="AAS14146.1"/>
    <property type="molecule type" value="Genomic_DNA"/>
</dbReference>
<dbReference type="RefSeq" id="WP_010962579.1">
    <property type="nucleotide sequence ID" value="NZ_OX384529.1"/>
</dbReference>
<dbReference type="SMR" id="Q73HW7"/>
<dbReference type="EnsemblBacteria" id="AAS14146">
    <property type="protein sequence ID" value="AAS14146"/>
    <property type="gene ID" value="WD_0423"/>
</dbReference>
<dbReference type="KEGG" id="wol:WD_0423"/>
<dbReference type="eggNOG" id="COG0060">
    <property type="taxonomic scope" value="Bacteria"/>
</dbReference>
<dbReference type="Proteomes" id="UP000008215">
    <property type="component" value="Chromosome"/>
</dbReference>
<dbReference type="GO" id="GO:0005737">
    <property type="term" value="C:cytoplasm"/>
    <property type="evidence" value="ECO:0007669"/>
    <property type="project" value="UniProtKB-SubCell"/>
</dbReference>
<dbReference type="GO" id="GO:0002161">
    <property type="term" value="F:aminoacyl-tRNA deacylase activity"/>
    <property type="evidence" value="ECO:0007669"/>
    <property type="project" value="InterPro"/>
</dbReference>
<dbReference type="GO" id="GO:0005524">
    <property type="term" value="F:ATP binding"/>
    <property type="evidence" value="ECO:0007669"/>
    <property type="project" value="UniProtKB-UniRule"/>
</dbReference>
<dbReference type="GO" id="GO:0004822">
    <property type="term" value="F:isoleucine-tRNA ligase activity"/>
    <property type="evidence" value="ECO:0007669"/>
    <property type="project" value="UniProtKB-UniRule"/>
</dbReference>
<dbReference type="GO" id="GO:0000049">
    <property type="term" value="F:tRNA binding"/>
    <property type="evidence" value="ECO:0007669"/>
    <property type="project" value="InterPro"/>
</dbReference>
<dbReference type="GO" id="GO:0008270">
    <property type="term" value="F:zinc ion binding"/>
    <property type="evidence" value="ECO:0007669"/>
    <property type="project" value="UniProtKB-UniRule"/>
</dbReference>
<dbReference type="GO" id="GO:0006428">
    <property type="term" value="P:isoleucyl-tRNA aminoacylation"/>
    <property type="evidence" value="ECO:0007669"/>
    <property type="project" value="UniProtKB-UniRule"/>
</dbReference>
<dbReference type="CDD" id="cd07961">
    <property type="entry name" value="Anticodon_Ia_Ile_ABEc"/>
    <property type="match status" value="1"/>
</dbReference>
<dbReference type="CDD" id="cd00818">
    <property type="entry name" value="IleRS_core"/>
    <property type="match status" value="1"/>
</dbReference>
<dbReference type="FunFam" id="3.40.50.620:FF:000075">
    <property type="entry name" value="Isoleucine--tRNA ligase"/>
    <property type="match status" value="1"/>
</dbReference>
<dbReference type="FunFam" id="3.40.50.620:FF:000241">
    <property type="entry name" value="Isoleucine--tRNA ligase"/>
    <property type="match status" value="1"/>
</dbReference>
<dbReference type="Gene3D" id="3.40.50.620">
    <property type="entry name" value="HUPs"/>
    <property type="match status" value="2"/>
</dbReference>
<dbReference type="Gene3D" id="1.10.730.10">
    <property type="entry name" value="Isoleucyl-tRNA Synthetase, Domain 1"/>
    <property type="match status" value="1"/>
</dbReference>
<dbReference type="HAMAP" id="MF_02003">
    <property type="entry name" value="Ile_tRNA_synth_type2"/>
    <property type="match status" value="1"/>
</dbReference>
<dbReference type="InterPro" id="IPR001412">
    <property type="entry name" value="aa-tRNA-synth_I_CS"/>
</dbReference>
<dbReference type="InterPro" id="IPR002300">
    <property type="entry name" value="aa-tRNA-synth_Ia"/>
</dbReference>
<dbReference type="InterPro" id="IPR033709">
    <property type="entry name" value="Anticodon_Ile_ABEc"/>
</dbReference>
<dbReference type="InterPro" id="IPR002301">
    <property type="entry name" value="Ile-tRNA-ligase"/>
</dbReference>
<dbReference type="InterPro" id="IPR023586">
    <property type="entry name" value="Ile-tRNA-ligase_type2"/>
</dbReference>
<dbReference type="InterPro" id="IPR013155">
    <property type="entry name" value="M/V/L/I-tRNA-synth_anticd-bd"/>
</dbReference>
<dbReference type="InterPro" id="IPR014729">
    <property type="entry name" value="Rossmann-like_a/b/a_fold"/>
</dbReference>
<dbReference type="InterPro" id="IPR009080">
    <property type="entry name" value="tRNAsynth_Ia_anticodon-bd"/>
</dbReference>
<dbReference type="InterPro" id="IPR009008">
    <property type="entry name" value="Val/Leu/Ile-tRNA-synth_edit"/>
</dbReference>
<dbReference type="PANTHER" id="PTHR42780:SF1">
    <property type="entry name" value="ISOLEUCINE--TRNA LIGASE, CYTOPLASMIC"/>
    <property type="match status" value="1"/>
</dbReference>
<dbReference type="PANTHER" id="PTHR42780">
    <property type="entry name" value="SOLEUCYL-TRNA SYNTHETASE"/>
    <property type="match status" value="1"/>
</dbReference>
<dbReference type="Pfam" id="PF08264">
    <property type="entry name" value="Anticodon_1"/>
    <property type="match status" value="1"/>
</dbReference>
<dbReference type="Pfam" id="PF19302">
    <property type="entry name" value="DUF5915"/>
    <property type="match status" value="1"/>
</dbReference>
<dbReference type="Pfam" id="PF00133">
    <property type="entry name" value="tRNA-synt_1"/>
    <property type="match status" value="1"/>
</dbReference>
<dbReference type="PRINTS" id="PR00984">
    <property type="entry name" value="TRNASYNTHILE"/>
</dbReference>
<dbReference type="SUPFAM" id="SSF47323">
    <property type="entry name" value="Anticodon-binding domain of a subclass of class I aminoacyl-tRNA synthetases"/>
    <property type="match status" value="2"/>
</dbReference>
<dbReference type="SUPFAM" id="SSF52374">
    <property type="entry name" value="Nucleotidylyl transferase"/>
    <property type="match status" value="1"/>
</dbReference>
<dbReference type="SUPFAM" id="SSF50677">
    <property type="entry name" value="ValRS/IleRS/LeuRS editing domain"/>
    <property type="match status" value="1"/>
</dbReference>
<dbReference type="PROSITE" id="PS00178">
    <property type="entry name" value="AA_TRNA_LIGASE_I"/>
    <property type="match status" value="1"/>
</dbReference>
<gene>
    <name evidence="1" type="primary">ileS</name>
    <name type="ordered locus">WD_0423</name>
</gene>
<evidence type="ECO:0000255" key="1">
    <source>
        <dbReference type="HAMAP-Rule" id="MF_02003"/>
    </source>
</evidence>